<dbReference type="EMBL" id="CU329670">
    <property type="protein sequence ID" value="CAA22593.1"/>
    <property type="molecule type" value="Genomic_DNA"/>
</dbReference>
<dbReference type="PIR" id="T38616">
    <property type="entry name" value="T38616"/>
</dbReference>
<dbReference type="PIR" id="T39006">
    <property type="entry name" value="T39006"/>
</dbReference>
<dbReference type="RefSeq" id="NP_594632.1">
    <property type="nucleotide sequence ID" value="NM_001020060.2"/>
</dbReference>
<dbReference type="BioGRID" id="279619">
    <property type="interactions" value="72"/>
</dbReference>
<dbReference type="STRING" id="284812.O14100"/>
<dbReference type="iPTMnet" id="O14100"/>
<dbReference type="PaxDb" id="4896-SPAC31F12.01.1"/>
<dbReference type="EnsemblFungi" id="SPAC31F12.01.1">
    <property type="protein sequence ID" value="SPAC31F12.01.1:pep"/>
    <property type="gene ID" value="SPAC31F12.01"/>
</dbReference>
<dbReference type="GeneID" id="2543190"/>
<dbReference type="KEGG" id="spo:2543190"/>
<dbReference type="PomBase" id="SPAC31F12.01">
    <property type="gene designation" value="zds1"/>
</dbReference>
<dbReference type="VEuPathDB" id="FungiDB:SPAC31F12.01"/>
<dbReference type="eggNOG" id="ENOG502RC08">
    <property type="taxonomic scope" value="Eukaryota"/>
</dbReference>
<dbReference type="HOGENOM" id="CLU_312642_0_0_1"/>
<dbReference type="InParanoid" id="O14100"/>
<dbReference type="PhylomeDB" id="O14100"/>
<dbReference type="PRO" id="PR:O14100"/>
<dbReference type="Proteomes" id="UP000002485">
    <property type="component" value="Chromosome I"/>
</dbReference>
<dbReference type="GO" id="GO:0032153">
    <property type="term" value="C:cell division site"/>
    <property type="evidence" value="ECO:0007005"/>
    <property type="project" value="PomBase"/>
</dbReference>
<dbReference type="GO" id="GO:0005737">
    <property type="term" value="C:cytoplasm"/>
    <property type="evidence" value="ECO:0000318"/>
    <property type="project" value="GO_Central"/>
</dbReference>
<dbReference type="GO" id="GO:0005829">
    <property type="term" value="C:cytosol"/>
    <property type="evidence" value="ECO:0007005"/>
    <property type="project" value="PomBase"/>
</dbReference>
<dbReference type="GO" id="GO:0019888">
    <property type="term" value="F:protein phosphatase regulator activity"/>
    <property type="evidence" value="ECO:0000266"/>
    <property type="project" value="PomBase"/>
</dbReference>
<dbReference type="GO" id="GO:0071555">
    <property type="term" value="P:cell wall organization"/>
    <property type="evidence" value="ECO:0007669"/>
    <property type="project" value="UniProtKB-KW"/>
</dbReference>
<dbReference type="GO" id="GO:0030010">
    <property type="term" value="P:establishment of cell polarity"/>
    <property type="evidence" value="ECO:0000318"/>
    <property type="project" value="GO_Central"/>
</dbReference>
<dbReference type="GO" id="GO:0051321">
    <property type="term" value="P:meiotic cell cycle"/>
    <property type="evidence" value="ECO:0007669"/>
    <property type="project" value="UniProtKB-KW"/>
</dbReference>
<dbReference type="GO" id="GO:0010971">
    <property type="term" value="P:positive regulation of G2/M transition of mitotic cell cycle"/>
    <property type="evidence" value="ECO:0000318"/>
    <property type="project" value="GO_Central"/>
</dbReference>
<dbReference type="GO" id="GO:0007165">
    <property type="term" value="P:signal transduction"/>
    <property type="evidence" value="ECO:0000303"/>
    <property type="project" value="PomBase"/>
</dbReference>
<dbReference type="InterPro" id="IPR040206">
    <property type="entry name" value="Zds1/2"/>
</dbReference>
<dbReference type="InterPro" id="IPR013941">
    <property type="entry name" value="ZDS1_C"/>
</dbReference>
<dbReference type="PANTHER" id="PTHR28089">
    <property type="entry name" value="PROTEIN ZDS1-RELATED"/>
    <property type="match status" value="1"/>
</dbReference>
<dbReference type="PANTHER" id="PTHR28089:SF1">
    <property type="entry name" value="PROTEIN ZDS1-RELATED"/>
    <property type="match status" value="1"/>
</dbReference>
<dbReference type="Pfam" id="PF08632">
    <property type="entry name" value="Zds_C"/>
    <property type="match status" value="1"/>
</dbReference>
<dbReference type="SMART" id="SM01327">
    <property type="entry name" value="Zds_C"/>
    <property type="match status" value="1"/>
</dbReference>
<feature type="chain" id="PRO_0000249236" description="Protein zds1">
    <location>
        <begin position="1"/>
        <end position="938"/>
    </location>
</feature>
<feature type="region of interest" description="Disordered" evidence="1">
    <location>
        <begin position="1"/>
        <end position="140"/>
    </location>
</feature>
<feature type="region of interest" description="Disordered" evidence="1">
    <location>
        <begin position="326"/>
        <end position="386"/>
    </location>
</feature>
<feature type="region of interest" description="Disordered" evidence="1">
    <location>
        <begin position="424"/>
        <end position="807"/>
    </location>
</feature>
<feature type="compositionally biased region" description="Polar residues" evidence="1">
    <location>
        <begin position="1"/>
        <end position="13"/>
    </location>
</feature>
<feature type="compositionally biased region" description="Low complexity" evidence="1">
    <location>
        <begin position="40"/>
        <end position="54"/>
    </location>
</feature>
<feature type="compositionally biased region" description="Basic and acidic residues" evidence="1">
    <location>
        <begin position="57"/>
        <end position="67"/>
    </location>
</feature>
<feature type="compositionally biased region" description="Polar residues" evidence="1">
    <location>
        <begin position="77"/>
        <end position="86"/>
    </location>
</feature>
<feature type="compositionally biased region" description="Low complexity" evidence="1">
    <location>
        <begin position="116"/>
        <end position="126"/>
    </location>
</feature>
<feature type="compositionally biased region" description="Basic and acidic residues" evidence="1">
    <location>
        <begin position="127"/>
        <end position="140"/>
    </location>
</feature>
<feature type="compositionally biased region" description="Polar residues" evidence="1">
    <location>
        <begin position="330"/>
        <end position="349"/>
    </location>
</feature>
<feature type="compositionally biased region" description="Polar residues" evidence="1">
    <location>
        <begin position="370"/>
        <end position="380"/>
    </location>
</feature>
<feature type="compositionally biased region" description="Low complexity" evidence="1">
    <location>
        <begin position="429"/>
        <end position="440"/>
    </location>
</feature>
<feature type="compositionally biased region" description="Basic and acidic residues" evidence="1">
    <location>
        <begin position="467"/>
        <end position="485"/>
    </location>
</feature>
<feature type="compositionally biased region" description="Basic and acidic residues" evidence="1">
    <location>
        <begin position="512"/>
        <end position="556"/>
    </location>
</feature>
<feature type="compositionally biased region" description="Polar residues" evidence="1">
    <location>
        <begin position="558"/>
        <end position="567"/>
    </location>
</feature>
<feature type="compositionally biased region" description="Pro residues" evidence="1">
    <location>
        <begin position="587"/>
        <end position="596"/>
    </location>
</feature>
<feature type="compositionally biased region" description="Basic and acidic residues" evidence="1">
    <location>
        <begin position="622"/>
        <end position="635"/>
    </location>
</feature>
<feature type="compositionally biased region" description="Polar residues" evidence="1">
    <location>
        <begin position="642"/>
        <end position="669"/>
    </location>
</feature>
<feature type="compositionally biased region" description="Basic residues" evidence="1">
    <location>
        <begin position="702"/>
        <end position="711"/>
    </location>
</feature>
<feature type="compositionally biased region" description="Low complexity" evidence="1">
    <location>
        <begin position="715"/>
        <end position="725"/>
    </location>
</feature>
<feature type="compositionally biased region" description="Basic and acidic residues" evidence="1">
    <location>
        <begin position="798"/>
        <end position="807"/>
    </location>
</feature>
<accession>O14100</accession>
<sequence>MSSSSVSNTLSIETKSDPKDPAFVASQESTECNEHDTTQLSGSSSEPLENNSSLTRSTDDPSVEIRSKLVSPDNEANLLSDQNITISNENNNENDTTEEAETSSGNEAADDEDSSSDAQSSVPSFSEIHDGMSEEELDKERKTLTHLRRISLQGADDPEIPTDWSVAMSPPETEQDASTLFWVPANLHPELNPTGWKSFLDLQVKNLKSPTATDTSSSPLEHIRSLRRRKSLLSRQVKADDAVINYQDGSPIVEKAYLKRHRSLRLNELEHLESLARDPHRMVSLVDGMSNGSPEDSPLLVSPNHFLQRSSRTTIRRTGASIRTIHRGKTSTLSGNRSHSILQKPTDTSPLHKIEPISADELVESDDSRTSALSNSQNPSDDVENQSDQALEVLSLTNPPKIDNASADTTLHKETNKIDKLYVSENKAESAVASESSLSEGTLALKAPAPENKPEKSSTSKPPVPENKAEDSVVLKSSVPEDKSENSIASKPSATEGIPENAIALQSSVPENKAEDSVVLKSSVPEDKSEDSVPSKSSVLEDKHENSVEIDKKADDSLPSNNKTEGYTPSVVREEKNYSEPNASPSVIPPRVPTPVPGRTLSPKPTRIPTPIPSSLNVSLESSKKPEIFHERHIPTPETGPNKPSKNNILKSTQVPVTPKQKSSTANKGSTSSPSPPSSESKKTKRSWGRLFVSGDSDKEHKEHKKDKQKKKNDQISSSSKSASSFKKDRDKESIFGSLFGSKKKQTEIPPVSSSPPHNDAPPKAKPISAPSELPNTTSVAEAKCQTVTDDEGTDQQSDEKSTEPKTFIPDKDYYWSRFPICTERAIYRLSHIKLSNAHRPLFQQVLLSNFMYSYLDLISRISSNRPMNNVQQSTAKPIRKDINGQQRRSEFSAENVKNELENLSYQFGDQRKRNLNRKGSTIHTVSQNIQKVSKNAK</sequence>
<evidence type="ECO:0000256" key="1">
    <source>
        <dbReference type="SAM" id="MobiDB-lite"/>
    </source>
</evidence>
<evidence type="ECO:0000269" key="2">
    <source>
    </source>
</evidence>
<evidence type="ECO:0000269" key="3">
    <source>
    </source>
</evidence>
<evidence type="ECO:0000269" key="4">
    <source>
    </source>
</evidence>
<protein>
    <recommendedName>
        <fullName>Protein zds1</fullName>
    </recommendedName>
    <alternativeName>
        <fullName>Meiotically up-regulated gene 88 protein</fullName>
    </alternativeName>
</protein>
<name>ZDS1_SCHPO</name>
<proteinExistence type="evidence at protein level"/>
<gene>
    <name type="primary">zds1</name>
    <name type="synonym">mug88</name>
    <name type="ORF">SPAC31F12.01</name>
    <name type="ORF">SPAC637.14</name>
</gene>
<keyword id="KW-0961">Cell wall biogenesis/degradation</keyword>
<keyword id="KW-0963">Cytoplasm</keyword>
<keyword id="KW-0469">Meiosis</keyword>
<keyword id="KW-1185">Reference proteome</keyword>
<comment type="function">
    <text evidence="2 3">Has a role in establishing cell polarity. Also required for maintenance of cell wall integrity, sexual differentiation, calcium tolerance and cell morphology. Involved in Ras-MAPK signaling pathway at cell cortex. Has a role in meiosis.</text>
</comment>
<comment type="subcellular location">
    <subcellularLocation>
        <location evidence="3 4">Cytoplasm</location>
    </subcellularLocation>
    <text>Localizes to the septum and cell cortex.</text>
</comment>
<organism>
    <name type="scientific">Schizosaccharomyces pombe (strain 972 / ATCC 24843)</name>
    <name type="common">Fission yeast</name>
    <dbReference type="NCBI Taxonomy" id="284812"/>
    <lineage>
        <taxon>Eukaryota</taxon>
        <taxon>Fungi</taxon>
        <taxon>Dikarya</taxon>
        <taxon>Ascomycota</taxon>
        <taxon>Taphrinomycotina</taxon>
        <taxon>Schizosaccharomycetes</taxon>
        <taxon>Schizosaccharomycetales</taxon>
        <taxon>Schizosaccharomycetaceae</taxon>
        <taxon>Schizosaccharomyces</taxon>
    </lineage>
</organism>
<reference key="1">
    <citation type="journal article" date="2002" name="Nature">
        <title>The genome sequence of Schizosaccharomyces pombe.</title>
        <authorList>
            <person name="Wood V."/>
            <person name="Gwilliam R."/>
            <person name="Rajandream M.A."/>
            <person name="Lyne M.H."/>
            <person name="Lyne R."/>
            <person name="Stewart A."/>
            <person name="Sgouros J.G."/>
            <person name="Peat N."/>
            <person name="Hayles J."/>
            <person name="Baker S.G."/>
            <person name="Basham D."/>
            <person name="Bowman S."/>
            <person name="Brooks K."/>
            <person name="Brown D."/>
            <person name="Brown S."/>
            <person name="Chillingworth T."/>
            <person name="Churcher C.M."/>
            <person name="Collins M."/>
            <person name="Connor R."/>
            <person name="Cronin A."/>
            <person name="Davis P."/>
            <person name="Feltwell T."/>
            <person name="Fraser A."/>
            <person name="Gentles S."/>
            <person name="Goble A."/>
            <person name="Hamlin N."/>
            <person name="Harris D.E."/>
            <person name="Hidalgo J."/>
            <person name="Hodgson G."/>
            <person name="Holroyd S."/>
            <person name="Hornsby T."/>
            <person name="Howarth S."/>
            <person name="Huckle E.J."/>
            <person name="Hunt S."/>
            <person name="Jagels K."/>
            <person name="James K.D."/>
            <person name="Jones L."/>
            <person name="Jones M."/>
            <person name="Leather S."/>
            <person name="McDonald S."/>
            <person name="McLean J."/>
            <person name="Mooney P."/>
            <person name="Moule S."/>
            <person name="Mungall K.L."/>
            <person name="Murphy L.D."/>
            <person name="Niblett D."/>
            <person name="Odell C."/>
            <person name="Oliver K."/>
            <person name="O'Neil S."/>
            <person name="Pearson D."/>
            <person name="Quail M.A."/>
            <person name="Rabbinowitsch E."/>
            <person name="Rutherford K.M."/>
            <person name="Rutter S."/>
            <person name="Saunders D."/>
            <person name="Seeger K."/>
            <person name="Sharp S."/>
            <person name="Skelton J."/>
            <person name="Simmonds M.N."/>
            <person name="Squares R."/>
            <person name="Squares S."/>
            <person name="Stevens K."/>
            <person name="Taylor K."/>
            <person name="Taylor R.G."/>
            <person name="Tivey A."/>
            <person name="Walsh S.V."/>
            <person name="Warren T."/>
            <person name="Whitehead S."/>
            <person name="Woodward J.R."/>
            <person name="Volckaert G."/>
            <person name="Aert R."/>
            <person name="Robben J."/>
            <person name="Grymonprez B."/>
            <person name="Weltjens I."/>
            <person name="Vanstreels E."/>
            <person name="Rieger M."/>
            <person name="Schaefer M."/>
            <person name="Mueller-Auer S."/>
            <person name="Gabel C."/>
            <person name="Fuchs M."/>
            <person name="Duesterhoeft A."/>
            <person name="Fritzc C."/>
            <person name="Holzer E."/>
            <person name="Moestl D."/>
            <person name="Hilbert H."/>
            <person name="Borzym K."/>
            <person name="Langer I."/>
            <person name="Beck A."/>
            <person name="Lehrach H."/>
            <person name="Reinhardt R."/>
            <person name="Pohl T.M."/>
            <person name="Eger P."/>
            <person name="Zimmermann W."/>
            <person name="Wedler H."/>
            <person name="Wambutt R."/>
            <person name="Purnelle B."/>
            <person name="Goffeau A."/>
            <person name="Cadieu E."/>
            <person name="Dreano S."/>
            <person name="Gloux S."/>
            <person name="Lelaure V."/>
            <person name="Mottier S."/>
            <person name="Galibert F."/>
            <person name="Aves S.J."/>
            <person name="Xiang Z."/>
            <person name="Hunt C."/>
            <person name="Moore K."/>
            <person name="Hurst S.M."/>
            <person name="Lucas M."/>
            <person name="Rochet M."/>
            <person name="Gaillardin C."/>
            <person name="Tallada V.A."/>
            <person name="Garzon A."/>
            <person name="Thode G."/>
            <person name="Daga R.R."/>
            <person name="Cruzado L."/>
            <person name="Jimenez J."/>
            <person name="Sanchez M."/>
            <person name="del Rey F."/>
            <person name="Benito J."/>
            <person name="Dominguez A."/>
            <person name="Revuelta J.L."/>
            <person name="Moreno S."/>
            <person name="Armstrong J."/>
            <person name="Forsburg S.L."/>
            <person name="Cerutti L."/>
            <person name="Lowe T."/>
            <person name="McCombie W.R."/>
            <person name="Paulsen I."/>
            <person name="Potashkin J."/>
            <person name="Shpakovski G.V."/>
            <person name="Ussery D."/>
            <person name="Barrell B.G."/>
            <person name="Nurse P."/>
        </authorList>
    </citation>
    <scope>NUCLEOTIDE SEQUENCE [LARGE SCALE GENOMIC DNA]</scope>
    <source>
        <strain>972 / ATCC 24843</strain>
    </source>
</reference>
<reference key="2">
    <citation type="journal article" date="2005" name="Curr. Biol.">
        <title>A large-scale screen in S. pombe identifies seven novel genes required for critical meiotic events.</title>
        <authorList>
            <person name="Martin-Castellanos C."/>
            <person name="Blanco M."/>
            <person name="Rozalen A.E."/>
            <person name="Perez-Hidalgo L."/>
            <person name="Garcia A.I."/>
            <person name="Conde F."/>
            <person name="Mata J."/>
            <person name="Ellermeier C."/>
            <person name="Davis L."/>
            <person name="San-Segundo P."/>
            <person name="Smith G.R."/>
            <person name="Moreno S."/>
        </authorList>
    </citation>
    <scope>FUNCTION IN MEIOSIS</scope>
</reference>
<reference key="3">
    <citation type="journal article" date="2006" name="Genetics">
        <title>zds1, a novel gene encoding an ortholog of Zds1 and Zds2, controls sexual differentiation, cell wall integrity and cell morphology in fission yeast.</title>
        <authorList>
            <person name="Yakura M."/>
            <person name="Ozoe F."/>
            <person name="Ishida H."/>
            <person name="Nakagawa T."/>
            <person name="Tanaka K."/>
            <person name="Matsuda H."/>
            <person name="Kawamukai M."/>
        </authorList>
    </citation>
    <scope>FUNCTION</scope>
    <scope>SUBCELLULAR LOCATION</scope>
</reference>
<reference key="4">
    <citation type="journal article" date="2006" name="Nat. Biotechnol.">
        <title>ORFeome cloning and global analysis of protein localization in the fission yeast Schizosaccharomyces pombe.</title>
        <authorList>
            <person name="Matsuyama A."/>
            <person name="Arai R."/>
            <person name="Yashiroda Y."/>
            <person name="Shirai A."/>
            <person name="Kamata A."/>
            <person name="Sekido S."/>
            <person name="Kobayashi Y."/>
            <person name="Hashimoto A."/>
            <person name="Hamamoto M."/>
            <person name="Hiraoka Y."/>
            <person name="Horinouchi S."/>
            <person name="Yoshida M."/>
        </authorList>
    </citation>
    <scope>SUBCELLULAR LOCATION [LARGE SCALE ANALYSIS]</scope>
</reference>